<organism>
    <name type="scientific">Nicotiana tabacum</name>
    <name type="common">Common tobacco</name>
    <dbReference type="NCBI Taxonomy" id="4097"/>
    <lineage>
        <taxon>Eukaryota</taxon>
        <taxon>Viridiplantae</taxon>
        <taxon>Streptophyta</taxon>
        <taxon>Embryophyta</taxon>
        <taxon>Tracheophyta</taxon>
        <taxon>Spermatophyta</taxon>
        <taxon>Magnoliopsida</taxon>
        <taxon>eudicotyledons</taxon>
        <taxon>Gunneridae</taxon>
        <taxon>Pentapetalae</taxon>
        <taxon>asterids</taxon>
        <taxon>lamiids</taxon>
        <taxon>Solanales</taxon>
        <taxon>Solanaceae</taxon>
        <taxon>Nicotianoideae</taxon>
        <taxon>Nicotianeae</taxon>
        <taxon>Nicotiana</taxon>
    </lineage>
</organism>
<accession>Q6SYB9</accession>
<accession>Q71S25</accession>
<name>METK2_TOBAC</name>
<comment type="function">
    <text evidence="5">Catalyzes the formation of S-adenosylmethionine from methionine and ATP. The reaction comprises two steps that are both catalyzed by the same enzyme: formation of S-adenosylmethionine (AdoMet) and triphosphate, and subsequent hydrolysis of the triphosphate.</text>
</comment>
<comment type="catalytic activity">
    <reaction evidence="5">
        <text>L-methionine + ATP + H2O = S-adenosyl-L-methionine + phosphate + diphosphate</text>
        <dbReference type="Rhea" id="RHEA:21080"/>
        <dbReference type="ChEBI" id="CHEBI:15377"/>
        <dbReference type="ChEBI" id="CHEBI:30616"/>
        <dbReference type="ChEBI" id="CHEBI:33019"/>
        <dbReference type="ChEBI" id="CHEBI:43474"/>
        <dbReference type="ChEBI" id="CHEBI:57844"/>
        <dbReference type="ChEBI" id="CHEBI:59789"/>
        <dbReference type="EC" id="2.5.1.6"/>
    </reaction>
</comment>
<comment type="cofactor">
    <cofactor evidence="5">
        <name>Mn(2+)</name>
        <dbReference type="ChEBI" id="CHEBI:29035"/>
    </cofactor>
    <cofactor evidence="5">
        <name>Mg(2+)</name>
        <dbReference type="ChEBI" id="CHEBI:18420"/>
    </cofactor>
    <cofactor evidence="5">
        <name>Co(2+)</name>
        <dbReference type="ChEBI" id="CHEBI:48828"/>
    </cofactor>
    <text evidence="3 5">Binds 2 divalent ions per subunit. The metal ions interact primarily with the substrate (By similarity). Can utilize magnesium, manganese or cobalt (in vitro) (By similarity).</text>
</comment>
<comment type="cofactor">
    <cofactor evidence="5">
        <name>K(+)</name>
        <dbReference type="ChEBI" id="CHEBI:29103"/>
    </cofactor>
    <text evidence="3">Binds 1 potassium ion per subunit. The potassium ion interacts primarily with the substrate (By similarity).</text>
</comment>
<comment type="pathway">
    <text evidence="5">Amino-acid biosynthesis; S-adenosyl-L-methionine biosynthesis; S-adenosyl-L-methionine from L-methionine: step 1/1.</text>
</comment>
<comment type="subunit">
    <text evidence="1">Homotetramer.</text>
</comment>
<comment type="subcellular location">
    <subcellularLocation>
        <location evidence="1">Cytoplasm</location>
    </subcellularLocation>
</comment>
<comment type="similarity">
    <text evidence="6">Belongs to the AdoMet synthase family.</text>
</comment>
<dbReference type="EC" id="2.5.1.6" evidence="5"/>
<dbReference type="EMBL" id="AF321140">
    <property type="protein sequence ID" value="AAQ14854.1"/>
    <property type="molecule type" value="mRNA"/>
</dbReference>
<dbReference type="EMBL" id="AY445582">
    <property type="protein sequence ID" value="AAR15895.1"/>
    <property type="molecule type" value="mRNA"/>
</dbReference>
<dbReference type="RefSeq" id="NP_001312727.1">
    <property type="nucleotide sequence ID" value="NM_001325798.1"/>
</dbReference>
<dbReference type="SMR" id="Q6SYB9"/>
<dbReference type="STRING" id="4097.Q6SYB9"/>
<dbReference type="PaxDb" id="4097-Q6SYB9"/>
<dbReference type="ProMEX" id="Q6SYB9"/>
<dbReference type="GeneID" id="107807060"/>
<dbReference type="KEGG" id="nta:107807060"/>
<dbReference type="OrthoDB" id="5852090at2759"/>
<dbReference type="UniPathway" id="UPA00315">
    <property type="reaction ID" value="UER00080"/>
</dbReference>
<dbReference type="Proteomes" id="UP000084051">
    <property type="component" value="Unplaced"/>
</dbReference>
<dbReference type="GO" id="GO:0005829">
    <property type="term" value="C:cytosol"/>
    <property type="evidence" value="ECO:0000318"/>
    <property type="project" value="GO_Central"/>
</dbReference>
<dbReference type="GO" id="GO:0005524">
    <property type="term" value="F:ATP binding"/>
    <property type="evidence" value="ECO:0007669"/>
    <property type="project" value="UniProtKB-KW"/>
</dbReference>
<dbReference type="GO" id="GO:0046872">
    <property type="term" value="F:metal ion binding"/>
    <property type="evidence" value="ECO:0007669"/>
    <property type="project" value="UniProtKB-KW"/>
</dbReference>
<dbReference type="GO" id="GO:0004478">
    <property type="term" value="F:methionine adenosyltransferase activity"/>
    <property type="evidence" value="ECO:0000318"/>
    <property type="project" value="GO_Central"/>
</dbReference>
<dbReference type="GO" id="GO:0006730">
    <property type="term" value="P:one-carbon metabolic process"/>
    <property type="evidence" value="ECO:0007669"/>
    <property type="project" value="UniProtKB-KW"/>
</dbReference>
<dbReference type="GO" id="GO:0006556">
    <property type="term" value="P:S-adenosylmethionine biosynthetic process"/>
    <property type="evidence" value="ECO:0000318"/>
    <property type="project" value="GO_Central"/>
</dbReference>
<dbReference type="CDD" id="cd18079">
    <property type="entry name" value="S-AdoMet_synt"/>
    <property type="match status" value="1"/>
</dbReference>
<dbReference type="FunFam" id="3.30.300.10:FF:000001">
    <property type="entry name" value="S-adenosylmethionine synthase"/>
    <property type="match status" value="1"/>
</dbReference>
<dbReference type="FunFam" id="3.30.300.10:FF:000003">
    <property type="entry name" value="S-adenosylmethionine synthase"/>
    <property type="match status" value="1"/>
</dbReference>
<dbReference type="FunFam" id="3.30.300.10:FF:000004">
    <property type="entry name" value="S-adenosylmethionine synthase"/>
    <property type="match status" value="1"/>
</dbReference>
<dbReference type="Gene3D" id="3.30.300.10">
    <property type="match status" value="3"/>
</dbReference>
<dbReference type="HAMAP" id="MF_00086">
    <property type="entry name" value="S_AdoMet_synth1"/>
    <property type="match status" value="1"/>
</dbReference>
<dbReference type="InterPro" id="IPR022631">
    <property type="entry name" value="ADOMET_SYNTHASE_CS"/>
</dbReference>
<dbReference type="InterPro" id="IPR022630">
    <property type="entry name" value="S-AdoMet_synt_C"/>
</dbReference>
<dbReference type="InterPro" id="IPR022629">
    <property type="entry name" value="S-AdoMet_synt_central"/>
</dbReference>
<dbReference type="InterPro" id="IPR022628">
    <property type="entry name" value="S-AdoMet_synt_N"/>
</dbReference>
<dbReference type="InterPro" id="IPR002133">
    <property type="entry name" value="S-AdoMet_synthetase"/>
</dbReference>
<dbReference type="InterPro" id="IPR022636">
    <property type="entry name" value="S-AdoMet_synthetase_sfam"/>
</dbReference>
<dbReference type="NCBIfam" id="TIGR01034">
    <property type="entry name" value="metK"/>
    <property type="match status" value="1"/>
</dbReference>
<dbReference type="PANTHER" id="PTHR11964">
    <property type="entry name" value="S-ADENOSYLMETHIONINE SYNTHETASE"/>
    <property type="match status" value="1"/>
</dbReference>
<dbReference type="Pfam" id="PF02773">
    <property type="entry name" value="S-AdoMet_synt_C"/>
    <property type="match status" value="1"/>
</dbReference>
<dbReference type="Pfam" id="PF02772">
    <property type="entry name" value="S-AdoMet_synt_M"/>
    <property type="match status" value="1"/>
</dbReference>
<dbReference type="Pfam" id="PF00438">
    <property type="entry name" value="S-AdoMet_synt_N"/>
    <property type="match status" value="1"/>
</dbReference>
<dbReference type="PIRSF" id="PIRSF000497">
    <property type="entry name" value="MAT"/>
    <property type="match status" value="1"/>
</dbReference>
<dbReference type="SUPFAM" id="SSF55973">
    <property type="entry name" value="S-adenosylmethionine synthetase"/>
    <property type="match status" value="3"/>
</dbReference>
<dbReference type="PROSITE" id="PS00376">
    <property type="entry name" value="ADOMET_SYNTHASE_1"/>
    <property type="match status" value="1"/>
</dbReference>
<feature type="chain" id="PRO_0000363052" description="S-adenosylmethionine synthase 2">
    <location>
        <begin position="1"/>
        <end position="390"/>
    </location>
</feature>
<feature type="binding site" evidence="3">
    <location>
        <position position="9"/>
    </location>
    <ligand>
        <name>Mg(2+)</name>
        <dbReference type="ChEBI" id="CHEBI:18420"/>
    </ligand>
</feature>
<feature type="binding site" description="in other chain" evidence="4">
    <location>
        <position position="15"/>
    </location>
    <ligand>
        <name>ATP</name>
        <dbReference type="ChEBI" id="CHEBI:30616"/>
        <note>ligand shared between two neighboring subunits</note>
    </ligand>
</feature>
<feature type="binding site" evidence="2">
    <location>
        <position position="43"/>
    </location>
    <ligand>
        <name>K(+)</name>
        <dbReference type="ChEBI" id="CHEBI:29103"/>
    </ligand>
</feature>
<feature type="binding site" description="in other chain" evidence="2">
    <location>
        <position position="56"/>
    </location>
    <ligand>
        <name>L-methionine</name>
        <dbReference type="ChEBI" id="CHEBI:57844"/>
        <note>ligand shared between two neighboring subunits</note>
    </ligand>
</feature>
<feature type="binding site" description="in other chain" evidence="2">
    <location>
        <position position="99"/>
    </location>
    <ligand>
        <name>L-methionine</name>
        <dbReference type="ChEBI" id="CHEBI:57844"/>
        <note>ligand shared between two neighboring subunits</note>
    </ligand>
</feature>
<feature type="binding site" description="in other chain" evidence="4">
    <location>
        <begin position="167"/>
        <end position="169"/>
    </location>
    <ligand>
        <name>ATP</name>
        <dbReference type="ChEBI" id="CHEBI:30616"/>
        <note>ligand shared between two neighboring subunits</note>
    </ligand>
</feature>
<feature type="binding site" description="in other chain" evidence="4">
    <location>
        <begin position="235"/>
        <end position="238"/>
    </location>
    <ligand>
        <name>ATP</name>
        <dbReference type="ChEBI" id="CHEBI:30616"/>
        <note>ligand shared between two neighboring subunits</note>
    </ligand>
</feature>
<feature type="binding site" description="in other chain" evidence="4">
    <location>
        <position position="246"/>
    </location>
    <ligand>
        <name>ATP</name>
        <dbReference type="ChEBI" id="CHEBI:30616"/>
        <note>ligand shared between two neighboring subunits</note>
    </ligand>
</feature>
<feature type="binding site" evidence="2">
    <location>
        <position position="246"/>
    </location>
    <ligand>
        <name>L-methionine</name>
        <dbReference type="ChEBI" id="CHEBI:57844"/>
        <note>ligand shared between two neighboring subunits</note>
    </ligand>
</feature>
<feature type="binding site" description="in other chain" evidence="2">
    <location>
        <begin position="252"/>
        <end position="253"/>
    </location>
    <ligand>
        <name>ATP</name>
        <dbReference type="ChEBI" id="CHEBI:30616"/>
        <note>ligand shared between two neighboring subunits</note>
    </ligand>
</feature>
<feature type="binding site" evidence="2">
    <location>
        <position position="269"/>
    </location>
    <ligand>
        <name>ATP</name>
        <dbReference type="ChEBI" id="CHEBI:30616"/>
        <note>ligand shared between two neighboring subunits</note>
    </ligand>
</feature>
<feature type="binding site" evidence="2">
    <location>
        <position position="273"/>
    </location>
    <ligand>
        <name>ATP</name>
        <dbReference type="ChEBI" id="CHEBI:30616"/>
        <note>ligand shared between two neighboring subunits</note>
    </ligand>
</feature>
<feature type="binding site" evidence="3">
    <location>
        <position position="277"/>
    </location>
    <ligand>
        <name>ATP</name>
        <dbReference type="ChEBI" id="CHEBI:30616"/>
        <note>ligand shared between two neighboring subunits</note>
    </ligand>
</feature>
<feature type="binding site" description="in other chain" evidence="2">
    <location>
        <position position="277"/>
    </location>
    <ligand>
        <name>L-methionine</name>
        <dbReference type="ChEBI" id="CHEBI:57844"/>
        <note>ligand shared between two neighboring subunits</note>
    </ligand>
</feature>
<feature type="sequence conflict" description="In Ref. 1; AAQ14854." evidence="6" ref="1">
    <original>E</original>
    <variation>G</variation>
    <location>
        <position position="267"/>
    </location>
</feature>
<sequence length="390" mass="42612">METFLFTSESVNEGHPDKLCDQVSDAILDACLEQDPESKVACETCTKTNMVMVFGEITTKAKVDYEKIVRDTCRGIGFTSADVGLDADHCKVLVNIEQQSPDIAQGVHGHLTKKPEEIGAGDQGHMFGYATDETPELMPLTHVLATQLGAKLTEVRKNKTCPWLRPDGKTQVTVEYKNDNGAMVPIRVHTVLISTQHDEGVTNEQIAQDLKEHVIKPVIPAKYLDENTIFHLNPSGRFVIGGPHGDAGLTGRKIIIDTYGGWGAHGEGAFSGKDPTKVDRSGAYIVRQAAKSVVAAGLARRCIVQVSYAIGVAEPLSVFVDTYKTGTIPDKDILALIKENFDFRPGMIAINLDLLRGGNFRYQKTAAYGHFGRDEADFTWETVKALKPKA</sequence>
<proteinExistence type="evidence at transcript level"/>
<gene>
    <name type="primary">SAMS2</name>
    <name type="synonym">SAMSYN</name>
</gene>
<evidence type="ECO:0000250" key="1"/>
<evidence type="ECO:0000250" key="2">
    <source>
        <dbReference type="UniProtKB" id="P0A817"/>
    </source>
</evidence>
<evidence type="ECO:0000250" key="3">
    <source>
        <dbReference type="UniProtKB" id="P13444"/>
    </source>
</evidence>
<evidence type="ECO:0000250" key="4">
    <source>
        <dbReference type="UniProtKB" id="Q00266"/>
    </source>
</evidence>
<evidence type="ECO:0000250" key="5">
    <source>
        <dbReference type="UniProtKB" id="Q96551"/>
    </source>
</evidence>
<evidence type="ECO:0000305" key="6"/>
<reference key="1">
    <citation type="submission" date="2000-11" db="EMBL/GenBank/DDBJ databases">
        <title>Nicotiana tabacum cDNA for S-adenosylmethionine synthase.</title>
        <authorList>
            <person name="Cordeiro A.F."/>
        </authorList>
    </citation>
    <scope>NUCLEOTIDE SEQUENCE [MRNA]</scope>
    <source>
        <strain>cv. SR1</strain>
    </source>
</reference>
<reference key="2">
    <citation type="submission" date="2003-10" db="EMBL/GenBank/DDBJ databases">
        <title>Isolation of novel ethephon-regulated genes from tobacco by improved differential display method.</title>
        <authorList>
            <person name="Yu T."/>
        </authorList>
    </citation>
    <scope>NUCLEOTIDE SEQUENCE [MRNA]</scope>
    <source>
        <strain>cv. SR1</strain>
        <tissue>Leaf</tissue>
    </source>
</reference>
<keyword id="KW-0067">ATP-binding</keyword>
<keyword id="KW-0170">Cobalt</keyword>
<keyword id="KW-0963">Cytoplasm</keyword>
<keyword id="KW-0460">Magnesium</keyword>
<keyword id="KW-0479">Metal-binding</keyword>
<keyword id="KW-0547">Nucleotide-binding</keyword>
<keyword id="KW-0554">One-carbon metabolism</keyword>
<keyword id="KW-0630">Potassium</keyword>
<keyword id="KW-1185">Reference proteome</keyword>
<keyword id="KW-0808">Transferase</keyword>
<protein>
    <recommendedName>
        <fullName>S-adenosylmethionine synthase 2</fullName>
        <shortName>AdoMet synthase 2</shortName>
        <ecNumber evidence="5">2.5.1.6</ecNumber>
    </recommendedName>
    <alternativeName>
        <fullName>Methionine adenosyltransferase 2</fullName>
        <shortName>MAT 2</shortName>
    </alternativeName>
</protein>